<proteinExistence type="evidence at protein level"/>
<protein>
    <recommendedName>
        <fullName>Pyruvate kinase</fullName>
        <shortName>PK</shortName>
        <ecNumber>2.7.1.40</ecNumber>
    </recommendedName>
</protein>
<reference key="1">
    <citation type="journal article" date="1996" name="Nucleic Acids Res.">
        <title>Complete sequence analysis of the genome of the bacterium Mycoplasma pneumoniae.</title>
        <authorList>
            <person name="Himmelreich R."/>
            <person name="Hilbert H."/>
            <person name="Plagens H."/>
            <person name="Pirkl E."/>
            <person name="Li B.-C."/>
            <person name="Herrmann R."/>
        </authorList>
    </citation>
    <scope>NUCLEOTIDE SEQUENCE [LARGE SCALE GENOMIC DNA]</scope>
    <source>
        <strain>ATCC 29342 / M129 / Subtype 1</strain>
    </source>
</reference>
<sequence>MIHHLKRTKIIATCGPALTKKLWTLAMLDDPAYAAMKAEAYANIENIIKNGVTVIRLNFSHGNHEEQAVRIKIVRDVAKKLNLPVSIMLDTNGPEIRVFETAPEGLKILKDSEVVINTTTKEVAKNNQFSVSDASGTYNMVNDVKVGQKILVDDGKLSLVVKRIDTKNNQVICVAQNDHTIFTKKRLNLPNADYSIPFLSAKDLRDIDFGLTHQIDYIAASFVNTTENIKQLRDYLASKNAKHVKLIAKIESNHALNNIDGIIKASDGIMVARGDLGLEIPYYKVPYWQRYMIKACRFFNKRVITATQMLDSLEKNIQPTRAEVTDVYFAVDRGNDATMLSGETANGAFPLNAVYVMKMIDKQSETFFDYQYNLNYYMANSKARHSEFWKQVVLPLAQKTAPKRKLINSDFKYDFVVHATNNLNEIYALSNARLAAAVIILTNDPQVYTGHGVDYGIFPYLIDQKPQSLSKAEFKSLANVAIKHYQQHGEISQLKQCLGVFHNKIISL</sequence>
<accession>P78031</accession>
<dbReference type="EC" id="2.7.1.40"/>
<dbReference type="EMBL" id="U00089">
    <property type="protein sequence ID" value="AAB96181.1"/>
    <property type="molecule type" value="Genomic_DNA"/>
</dbReference>
<dbReference type="PIR" id="S73859">
    <property type="entry name" value="S73859"/>
</dbReference>
<dbReference type="RefSeq" id="NP_109991.1">
    <property type="nucleotide sequence ID" value="NC_000912.1"/>
</dbReference>
<dbReference type="RefSeq" id="WP_010874660.1">
    <property type="nucleotide sequence ID" value="NZ_OU342337.1"/>
</dbReference>
<dbReference type="SMR" id="P78031"/>
<dbReference type="IntAct" id="P78031">
    <property type="interactions" value="5"/>
</dbReference>
<dbReference type="STRING" id="272634.MPN_303"/>
<dbReference type="EnsemblBacteria" id="AAB96181">
    <property type="protein sequence ID" value="AAB96181"/>
    <property type="gene ID" value="MPN_303"/>
</dbReference>
<dbReference type="GeneID" id="66609050"/>
<dbReference type="KEGG" id="mpn:MPN_303"/>
<dbReference type="PATRIC" id="fig|272634.6.peg.327"/>
<dbReference type="HOGENOM" id="CLU_015439_0_2_14"/>
<dbReference type="OrthoDB" id="9812123at2"/>
<dbReference type="BioCyc" id="MPNE272634:G1GJ3-473-MONOMER"/>
<dbReference type="UniPathway" id="UPA00109">
    <property type="reaction ID" value="UER00188"/>
</dbReference>
<dbReference type="Proteomes" id="UP000000808">
    <property type="component" value="Chromosome"/>
</dbReference>
<dbReference type="GO" id="GO:0016020">
    <property type="term" value="C:membrane"/>
    <property type="evidence" value="ECO:0000314"/>
    <property type="project" value="AgBase"/>
</dbReference>
<dbReference type="GO" id="GO:0005524">
    <property type="term" value="F:ATP binding"/>
    <property type="evidence" value="ECO:0007669"/>
    <property type="project" value="UniProtKB-KW"/>
</dbReference>
<dbReference type="GO" id="GO:0016301">
    <property type="term" value="F:kinase activity"/>
    <property type="evidence" value="ECO:0007669"/>
    <property type="project" value="UniProtKB-KW"/>
</dbReference>
<dbReference type="GO" id="GO:0000287">
    <property type="term" value="F:magnesium ion binding"/>
    <property type="evidence" value="ECO:0007669"/>
    <property type="project" value="InterPro"/>
</dbReference>
<dbReference type="GO" id="GO:0030955">
    <property type="term" value="F:potassium ion binding"/>
    <property type="evidence" value="ECO:0007669"/>
    <property type="project" value="InterPro"/>
</dbReference>
<dbReference type="GO" id="GO:0004743">
    <property type="term" value="F:pyruvate kinase activity"/>
    <property type="evidence" value="ECO:0007669"/>
    <property type="project" value="UniProtKB-EC"/>
</dbReference>
<dbReference type="GO" id="GO:0031639">
    <property type="term" value="P:plasminogen activation"/>
    <property type="evidence" value="ECO:0000314"/>
    <property type="project" value="AgBase"/>
</dbReference>
<dbReference type="FunFam" id="2.40.33.10:FF:000019">
    <property type="entry name" value="Pyruvate kinase"/>
    <property type="match status" value="1"/>
</dbReference>
<dbReference type="FunFam" id="3.40.1380.20:FF:000032">
    <property type="entry name" value="Pyruvate kinase"/>
    <property type="match status" value="1"/>
</dbReference>
<dbReference type="Gene3D" id="3.20.20.60">
    <property type="entry name" value="Phosphoenolpyruvate-binding domains"/>
    <property type="match status" value="1"/>
</dbReference>
<dbReference type="Gene3D" id="2.40.33.10">
    <property type="entry name" value="PK beta-barrel domain-like"/>
    <property type="match status" value="1"/>
</dbReference>
<dbReference type="Gene3D" id="3.40.1380.20">
    <property type="entry name" value="Pyruvate kinase, C-terminal domain"/>
    <property type="match status" value="1"/>
</dbReference>
<dbReference type="InterPro" id="IPR001697">
    <property type="entry name" value="Pyr_Knase"/>
</dbReference>
<dbReference type="InterPro" id="IPR015813">
    <property type="entry name" value="Pyrv/PenolPyrv_kinase-like_dom"/>
</dbReference>
<dbReference type="InterPro" id="IPR040442">
    <property type="entry name" value="Pyrv_kinase-like_dom_sf"/>
</dbReference>
<dbReference type="InterPro" id="IPR011037">
    <property type="entry name" value="Pyrv_Knase-like_insert_dom_sf"/>
</dbReference>
<dbReference type="InterPro" id="IPR018209">
    <property type="entry name" value="Pyrv_Knase_AS"/>
</dbReference>
<dbReference type="InterPro" id="IPR015793">
    <property type="entry name" value="Pyrv_Knase_brl"/>
</dbReference>
<dbReference type="InterPro" id="IPR036918">
    <property type="entry name" value="Pyrv_Knase_C_sf"/>
</dbReference>
<dbReference type="InterPro" id="IPR015806">
    <property type="entry name" value="Pyrv_Knase_insert_dom_sf"/>
</dbReference>
<dbReference type="NCBIfam" id="NF004491">
    <property type="entry name" value="PRK05826.1"/>
    <property type="match status" value="1"/>
</dbReference>
<dbReference type="NCBIfam" id="TIGR01064">
    <property type="entry name" value="pyruv_kin"/>
    <property type="match status" value="1"/>
</dbReference>
<dbReference type="PANTHER" id="PTHR11817">
    <property type="entry name" value="PYRUVATE KINASE"/>
    <property type="match status" value="1"/>
</dbReference>
<dbReference type="Pfam" id="PF00224">
    <property type="entry name" value="PK"/>
    <property type="match status" value="1"/>
</dbReference>
<dbReference type="PRINTS" id="PR01050">
    <property type="entry name" value="PYRUVTKNASE"/>
</dbReference>
<dbReference type="SUPFAM" id="SSF51621">
    <property type="entry name" value="Phosphoenolpyruvate/pyruvate domain"/>
    <property type="match status" value="1"/>
</dbReference>
<dbReference type="SUPFAM" id="SSF50800">
    <property type="entry name" value="PK beta-barrel domain-like"/>
    <property type="match status" value="1"/>
</dbReference>
<dbReference type="SUPFAM" id="SSF52935">
    <property type="entry name" value="PK C-terminal domain-like"/>
    <property type="match status" value="1"/>
</dbReference>
<dbReference type="PROSITE" id="PS00110">
    <property type="entry name" value="PYRUVATE_KINASE"/>
    <property type="match status" value="1"/>
</dbReference>
<evidence type="ECO:0000250" key="1"/>
<evidence type="ECO:0000250" key="2">
    <source>
        <dbReference type="UniProtKB" id="P14618"/>
    </source>
</evidence>
<evidence type="ECO:0000305" key="3"/>
<feature type="chain" id="PRO_0000112081" description="Pyruvate kinase">
    <location>
        <begin position="1"/>
        <end position="508"/>
    </location>
</feature>
<feature type="binding site" evidence="1">
    <location>
        <position position="56"/>
    </location>
    <ligand>
        <name>substrate</name>
    </ligand>
</feature>
<feature type="binding site" evidence="2">
    <location>
        <begin position="58"/>
        <end position="61"/>
    </location>
    <ligand>
        <name>ATP</name>
        <dbReference type="ChEBI" id="CHEBI:30616"/>
    </ligand>
</feature>
<feature type="binding site" evidence="1">
    <location>
        <position position="58"/>
    </location>
    <ligand>
        <name>K(+)</name>
        <dbReference type="ChEBI" id="CHEBI:29103"/>
    </ligand>
</feature>
<feature type="binding site" evidence="1">
    <location>
        <position position="60"/>
    </location>
    <ligand>
        <name>K(+)</name>
        <dbReference type="ChEBI" id="CHEBI:29103"/>
    </ligand>
</feature>
<feature type="binding site" evidence="1">
    <location>
        <position position="90"/>
    </location>
    <ligand>
        <name>K(+)</name>
        <dbReference type="ChEBI" id="CHEBI:29103"/>
    </ligand>
</feature>
<feature type="binding site" evidence="1">
    <location>
        <position position="91"/>
    </location>
    <ligand>
        <name>K(+)</name>
        <dbReference type="ChEBI" id="CHEBI:29103"/>
    </ligand>
</feature>
<feature type="binding site" evidence="2">
    <location>
        <position position="97"/>
    </location>
    <ligand>
        <name>ATP</name>
        <dbReference type="ChEBI" id="CHEBI:30616"/>
    </ligand>
</feature>
<feature type="binding site" evidence="2">
    <location>
        <position position="185"/>
    </location>
    <ligand>
        <name>ATP</name>
        <dbReference type="ChEBI" id="CHEBI:30616"/>
    </ligand>
</feature>
<feature type="binding site" evidence="1">
    <location>
        <position position="251"/>
    </location>
    <ligand>
        <name>Mg(2+)</name>
        <dbReference type="ChEBI" id="CHEBI:18420"/>
    </ligand>
</feature>
<feature type="binding site" evidence="1">
    <location>
        <position position="274"/>
    </location>
    <ligand>
        <name>substrate</name>
    </ligand>
</feature>
<feature type="binding site" evidence="1">
    <location>
        <position position="275"/>
    </location>
    <ligand>
        <name>Mg(2+)</name>
        <dbReference type="ChEBI" id="CHEBI:18420"/>
    </ligand>
</feature>
<feature type="binding site" evidence="1">
    <location>
        <position position="275"/>
    </location>
    <ligand>
        <name>substrate</name>
    </ligand>
</feature>
<feature type="binding site" evidence="1">
    <location>
        <position position="307"/>
    </location>
    <ligand>
        <name>substrate</name>
    </ligand>
</feature>
<feature type="site" description="Transition state stabilizer" evidence="1">
    <location>
        <position position="249"/>
    </location>
</feature>
<organism>
    <name type="scientific">Mycoplasma pneumoniae (strain ATCC 29342 / M129 / Subtype 1)</name>
    <name type="common">Mycoplasmoides pneumoniae</name>
    <dbReference type="NCBI Taxonomy" id="272634"/>
    <lineage>
        <taxon>Bacteria</taxon>
        <taxon>Bacillati</taxon>
        <taxon>Mycoplasmatota</taxon>
        <taxon>Mycoplasmoidales</taxon>
        <taxon>Mycoplasmoidaceae</taxon>
        <taxon>Mycoplasmoides</taxon>
    </lineage>
</organism>
<comment type="catalytic activity">
    <reaction>
        <text>pyruvate + ATP = phosphoenolpyruvate + ADP + H(+)</text>
        <dbReference type="Rhea" id="RHEA:18157"/>
        <dbReference type="ChEBI" id="CHEBI:15361"/>
        <dbReference type="ChEBI" id="CHEBI:15378"/>
        <dbReference type="ChEBI" id="CHEBI:30616"/>
        <dbReference type="ChEBI" id="CHEBI:58702"/>
        <dbReference type="ChEBI" id="CHEBI:456216"/>
        <dbReference type="EC" id="2.7.1.40"/>
    </reaction>
</comment>
<comment type="cofactor">
    <cofactor>
        <name>Mg(2+)</name>
        <dbReference type="ChEBI" id="CHEBI:18420"/>
    </cofactor>
</comment>
<comment type="cofactor">
    <cofactor>
        <name>K(+)</name>
        <dbReference type="ChEBI" id="CHEBI:29103"/>
    </cofactor>
</comment>
<comment type="activity regulation">
    <text evidence="1">Regulated by phosphoenolpyruvate substrate and is allosterically activated by ribose-5-phosphate, AMP and other nucleoside monophosphates but not by fructose-1,6-bisphosphate.</text>
</comment>
<comment type="pathway">
    <text>Carbohydrate degradation; glycolysis; pyruvate from D-glyceraldehyde 3-phosphate: step 5/5.</text>
</comment>
<comment type="subunit">
    <text evidence="1">Homotetramer.</text>
</comment>
<comment type="interaction">
    <interactant intactId="EBI-2259473">
        <id>P78031</id>
    </interactant>
    <interactant intactId="EBI-1058602">
        <id>P02788</id>
        <label>LTF</label>
    </interactant>
    <organismsDiffer>true</organismsDiffer>
    <experiments>3</experiments>
</comment>
<comment type="interaction">
    <interactant intactId="EBI-2259473">
        <id>P78031</id>
    </interactant>
    <interactant intactId="EBI-1036653">
        <id>P04004</id>
        <label>VTN</label>
    </interactant>
    <organismsDiffer>true</organismsDiffer>
    <experiments>3</experiments>
</comment>
<comment type="similarity">
    <text evidence="3">Belongs to the pyruvate kinase family.</text>
</comment>
<keyword id="KW-0021">Allosteric enzyme</keyword>
<keyword id="KW-0067">ATP-binding</keyword>
<keyword id="KW-0324">Glycolysis</keyword>
<keyword id="KW-0418">Kinase</keyword>
<keyword id="KW-0460">Magnesium</keyword>
<keyword id="KW-0479">Metal-binding</keyword>
<keyword id="KW-0547">Nucleotide-binding</keyword>
<keyword id="KW-0630">Potassium</keyword>
<keyword id="KW-0670">Pyruvate</keyword>
<keyword id="KW-1185">Reference proteome</keyword>
<keyword id="KW-0808">Transferase</keyword>
<gene>
    <name type="primary">pyk</name>
    <name type="ordered locus">MPN_303</name>
    <name type="ORF">MP533</name>
</gene>
<name>KPYK_MYCPN</name>